<comment type="function">
    <text evidence="1">This protein binds to 23S rRNA in the presence of protein L20.</text>
</comment>
<comment type="subunit">
    <text evidence="1">Part of the 50S ribosomal subunit. Contacts protein L20.</text>
</comment>
<comment type="similarity">
    <text evidence="1">Belongs to the bacterial ribosomal protein bL21 family.</text>
</comment>
<feature type="chain" id="PRO_0000270638" description="Large ribosomal subunit protein bL21">
    <location>
        <begin position="1"/>
        <end position="163"/>
    </location>
</feature>
<feature type="region of interest" description="Disordered" evidence="2">
    <location>
        <begin position="124"/>
        <end position="163"/>
    </location>
</feature>
<organism>
    <name type="scientific">Bartonella quintana (strain Toulouse)</name>
    <name type="common">Rochalimaea quintana</name>
    <dbReference type="NCBI Taxonomy" id="283165"/>
    <lineage>
        <taxon>Bacteria</taxon>
        <taxon>Pseudomonadati</taxon>
        <taxon>Pseudomonadota</taxon>
        <taxon>Alphaproteobacteria</taxon>
        <taxon>Hyphomicrobiales</taxon>
        <taxon>Bartonellaceae</taxon>
        <taxon>Bartonella</taxon>
    </lineage>
</organism>
<proteinExistence type="inferred from homology"/>
<evidence type="ECO:0000255" key="1">
    <source>
        <dbReference type="HAMAP-Rule" id="MF_01363"/>
    </source>
</evidence>
<evidence type="ECO:0000256" key="2">
    <source>
        <dbReference type="SAM" id="MobiDB-lite"/>
    </source>
</evidence>
<evidence type="ECO:0000305" key="3"/>
<accession>Q6G0T8</accession>
<dbReference type="EMBL" id="BX897700">
    <property type="protein sequence ID" value="CAF25636.1"/>
    <property type="molecule type" value="Genomic_DNA"/>
</dbReference>
<dbReference type="RefSeq" id="WP_011178957.1">
    <property type="nucleotide sequence ID" value="NC_005955.1"/>
</dbReference>
<dbReference type="SMR" id="Q6G0T8"/>
<dbReference type="KEGG" id="bqu:BQ01320"/>
<dbReference type="eggNOG" id="COG0261">
    <property type="taxonomic scope" value="Bacteria"/>
</dbReference>
<dbReference type="HOGENOM" id="CLU_061463_1_1_5"/>
<dbReference type="OrthoDB" id="9813334at2"/>
<dbReference type="Proteomes" id="UP000000597">
    <property type="component" value="Chromosome"/>
</dbReference>
<dbReference type="GO" id="GO:0005737">
    <property type="term" value="C:cytoplasm"/>
    <property type="evidence" value="ECO:0007669"/>
    <property type="project" value="UniProtKB-ARBA"/>
</dbReference>
<dbReference type="GO" id="GO:1990904">
    <property type="term" value="C:ribonucleoprotein complex"/>
    <property type="evidence" value="ECO:0007669"/>
    <property type="project" value="UniProtKB-KW"/>
</dbReference>
<dbReference type="GO" id="GO:0005840">
    <property type="term" value="C:ribosome"/>
    <property type="evidence" value="ECO:0007669"/>
    <property type="project" value="UniProtKB-KW"/>
</dbReference>
<dbReference type="GO" id="GO:0019843">
    <property type="term" value="F:rRNA binding"/>
    <property type="evidence" value="ECO:0007669"/>
    <property type="project" value="UniProtKB-UniRule"/>
</dbReference>
<dbReference type="GO" id="GO:0003735">
    <property type="term" value="F:structural constituent of ribosome"/>
    <property type="evidence" value="ECO:0007669"/>
    <property type="project" value="InterPro"/>
</dbReference>
<dbReference type="GO" id="GO:0006412">
    <property type="term" value="P:translation"/>
    <property type="evidence" value="ECO:0007669"/>
    <property type="project" value="UniProtKB-UniRule"/>
</dbReference>
<dbReference type="HAMAP" id="MF_01363">
    <property type="entry name" value="Ribosomal_bL21"/>
    <property type="match status" value="1"/>
</dbReference>
<dbReference type="InterPro" id="IPR028909">
    <property type="entry name" value="bL21-like"/>
</dbReference>
<dbReference type="InterPro" id="IPR036164">
    <property type="entry name" value="bL21-like_sf"/>
</dbReference>
<dbReference type="InterPro" id="IPR001787">
    <property type="entry name" value="Ribosomal_bL21"/>
</dbReference>
<dbReference type="NCBIfam" id="TIGR00061">
    <property type="entry name" value="L21"/>
    <property type="match status" value="1"/>
</dbReference>
<dbReference type="PANTHER" id="PTHR21349">
    <property type="entry name" value="50S RIBOSOMAL PROTEIN L21"/>
    <property type="match status" value="1"/>
</dbReference>
<dbReference type="PANTHER" id="PTHR21349:SF0">
    <property type="entry name" value="LARGE RIBOSOMAL SUBUNIT PROTEIN BL21M"/>
    <property type="match status" value="1"/>
</dbReference>
<dbReference type="Pfam" id="PF00829">
    <property type="entry name" value="Ribosomal_L21p"/>
    <property type="match status" value="1"/>
</dbReference>
<dbReference type="SUPFAM" id="SSF141091">
    <property type="entry name" value="L21p-like"/>
    <property type="match status" value="1"/>
</dbReference>
<name>RL21_BARQU</name>
<sequence>MFAVIKTGGKQYHVVANQVVKVEKVIGNAGDVVEFNDILMVGQEDNTIIGAPVVADALVTAEIIKQARARKVISFKKRRRQNSKCTRGHRQEVTILRILEILTGGLKPKRAVAKPIKEEAAVLKETTKKTKATVSIKKTAKKPSEKKSAPQKKAAVVSNNKED</sequence>
<protein>
    <recommendedName>
        <fullName evidence="1">Large ribosomal subunit protein bL21</fullName>
    </recommendedName>
    <alternativeName>
        <fullName evidence="3">50S ribosomal protein L21</fullName>
    </alternativeName>
</protein>
<reference key="1">
    <citation type="journal article" date="2004" name="Proc. Natl. Acad. Sci. U.S.A.">
        <title>The louse-borne human pathogen Bartonella quintana is a genomic derivative of the zoonotic agent Bartonella henselae.</title>
        <authorList>
            <person name="Alsmark U.C.M."/>
            <person name="Frank A.C."/>
            <person name="Karlberg E.O."/>
            <person name="Legault B.-A."/>
            <person name="Ardell D.H."/>
            <person name="Canbaeck B."/>
            <person name="Eriksson A.-S."/>
            <person name="Naeslund A.K."/>
            <person name="Handley S.A."/>
            <person name="Huvet M."/>
            <person name="La Scola B."/>
            <person name="Holmberg M."/>
            <person name="Andersson S.G.E."/>
        </authorList>
    </citation>
    <scope>NUCLEOTIDE SEQUENCE [LARGE SCALE GENOMIC DNA]</scope>
    <source>
        <strain>Toulouse</strain>
    </source>
</reference>
<gene>
    <name evidence="1" type="primary">rplU</name>
    <name type="ordered locus">BQ01320</name>
</gene>
<keyword id="KW-0687">Ribonucleoprotein</keyword>
<keyword id="KW-0689">Ribosomal protein</keyword>
<keyword id="KW-0694">RNA-binding</keyword>
<keyword id="KW-0699">rRNA-binding</keyword>